<sequence>MTRSEKVEIIAKLEEGFKASEAIVVCNYRGLSTKKLEELRNNARENNVKVQIVKNTLANIALNNSGKTGLVLKDTNIYLWGEDQLSVSKVAAKFEENNDKFEIKTAYIEGEVADVAKVKALAKMPSRNELLAMLLQVWNAPITNFTIGLNALKNKKESE</sequence>
<gene>
    <name evidence="1" type="primary">rplJ</name>
    <name type="ordered locus">C8J_0449</name>
</gene>
<organism>
    <name type="scientific">Campylobacter jejuni subsp. jejuni serotype O:6 (strain 81116 / NCTC 11828)</name>
    <dbReference type="NCBI Taxonomy" id="407148"/>
    <lineage>
        <taxon>Bacteria</taxon>
        <taxon>Pseudomonadati</taxon>
        <taxon>Campylobacterota</taxon>
        <taxon>Epsilonproteobacteria</taxon>
        <taxon>Campylobacterales</taxon>
        <taxon>Campylobacteraceae</taxon>
        <taxon>Campylobacter</taxon>
    </lineage>
</organism>
<accession>A8FKR1</accession>
<protein>
    <recommendedName>
        <fullName evidence="1">Large ribosomal subunit protein uL10</fullName>
    </recommendedName>
    <alternativeName>
        <fullName evidence="2">50S ribosomal protein L10</fullName>
    </alternativeName>
</protein>
<name>RL10_CAMJ8</name>
<keyword id="KW-0687">Ribonucleoprotein</keyword>
<keyword id="KW-0689">Ribosomal protein</keyword>
<keyword id="KW-0694">RNA-binding</keyword>
<keyword id="KW-0699">rRNA-binding</keyword>
<proteinExistence type="inferred from homology"/>
<feature type="chain" id="PRO_1000072088" description="Large ribosomal subunit protein uL10">
    <location>
        <begin position="1"/>
        <end position="159"/>
    </location>
</feature>
<dbReference type="EMBL" id="CP000814">
    <property type="protein sequence ID" value="ABV52048.1"/>
    <property type="molecule type" value="Genomic_DNA"/>
</dbReference>
<dbReference type="RefSeq" id="WP_002866976.1">
    <property type="nucleotide sequence ID" value="NC_009839.1"/>
</dbReference>
<dbReference type="SMR" id="A8FKR1"/>
<dbReference type="KEGG" id="cju:C8J_0449"/>
<dbReference type="HOGENOM" id="CLU_092227_2_2_7"/>
<dbReference type="GO" id="GO:0015934">
    <property type="term" value="C:large ribosomal subunit"/>
    <property type="evidence" value="ECO:0007669"/>
    <property type="project" value="InterPro"/>
</dbReference>
<dbReference type="GO" id="GO:0070180">
    <property type="term" value="F:large ribosomal subunit rRNA binding"/>
    <property type="evidence" value="ECO:0007669"/>
    <property type="project" value="UniProtKB-UniRule"/>
</dbReference>
<dbReference type="GO" id="GO:0003735">
    <property type="term" value="F:structural constituent of ribosome"/>
    <property type="evidence" value="ECO:0007669"/>
    <property type="project" value="InterPro"/>
</dbReference>
<dbReference type="GO" id="GO:0006412">
    <property type="term" value="P:translation"/>
    <property type="evidence" value="ECO:0007669"/>
    <property type="project" value="UniProtKB-UniRule"/>
</dbReference>
<dbReference type="CDD" id="cd05797">
    <property type="entry name" value="Ribosomal_L10"/>
    <property type="match status" value="1"/>
</dbReference>
<dbReference type="Gene3D" id="3.30.70.1730">
    <property type="match status" value="1"/>
</dbReference>
<dbReference type="Gene3D" id="6.10.250.290">
    <property type="match status" value="1"/>
</dbReference>
<dbReference type="HAMAP" id="MF_00362">
    <property type="entry name" value="Ribosomal_uL10"/>
    <property type="match status" value="1"/>
</dbReference>
<dbReference type="InterPro" id="IPR001790">
    <property type="entry name" value="Ribosomal_uL10"/>
</dbReference>
<dbReference type="InterPro" id="IPR043141">
    <property type="entry name" value="Ribosomal_uL10-like_sf"/>
</dbReference>
<dbReference type="InterPro" id="IPR022973">
    <property type="entry name" value="Ribosomal_uL10_bac"/>
</dbReference>
<dbReference type="InterPro" id="IPR047865">
    <property type="entry name" value="Ribosomal_uL10_bac_type"/>
</dbReference>
<dbReference type="InterPro" id="IPR002363">
    <property type="entry name" value="Ribosomal_uL10_CS_bac"/>
</dbReference>
<dbReference type="NCBIfam" id="NF000955">
    <property type="entry name" value="PRK00099.1-1"/>
    <property type="match status" value="1"/>
</dbReference>
<dbReference type="PANTHER" id="PTHR11560">
    <property type="entry name" value="39S RIBOSOMAL PROTEIN L10, MITOCHONDRIAL"/>
    <property type="match status" value="1"/>
</dbReference>
<dbReference type="Pfam" id="PF00466">
    <property type="entry name" value="Ribosomal_L10"/>
    <property type="match status" value="1"/>
</dbReference>
<dbReference type="SUPFAM" id="SSF160369">
    <property type="entry name" value="Ribosomal protein L10-like"/>
    <property type="match status" value="1"/>
</dbReference>
<dbReference type="PROSITE" id="PS01109">
    <property type="entry name" value="RIBOSOMAL_L10"/>
    <property type="match status" value="1"/>
</dbReference>
<comment type="function">
    <text evidence="1">Forms part of the ribosomal stalk, playing a central role in the interaction of the ribosome with GTP-bound translation factors.</text>
</comment>
<comment type="subunit">
    <text evidence="1">Part of the ribosomal stalk of the 50S ribosomal subunit. The N-terminus interacts with L11 and the large rRNA to form the base of the stalk. The C-terminus forms an elongated spine to which L12 dimers bind in a sequential fashion forming a multimeric L10(L12)X complex.</text>
</comment>
<comment type="similarity">
    <text evidence="1">Belongs to the universal ribosomal protein uL10 family.</text>
</comment>
<reference key="1">
    <citation type="journal article" date="2007" name="J. Bacteriol.">
        <title>The complete genome sequence of Campylobacter jejuni strain 81116 (NCTC11828).</title>
        <authorList>
            <person name="Pearson B.M."/>
            <person name="Gaskin D.J.H."/>
            <person name="Segers R.P.A.M."/>
            <person name="Wells J.M."/>
            <person name="Nuijten P.J.M."/>
            <person name="van Vliet A.H.M."/>
        </authorList>
    </citation>
    <scope>NUCLEOTIDE SEQUENCE [LARGE SCALE GENOMIC DNA]</scope>
    <source>
        <strain>81116 / NCTC 11828</strain>
    </source>
</reference>
<evidence type="ECO:0000255" key="1">
    <source>
        <dbReference type="HAMAP-Rule" id="MF_00362"/>
    </source>
</evidence>
<evidence type="ECO:0000305" key="2"/>